<gene>
    <name evidence="1" type="primary">nuoB1</name>
    <name type="ordered locus">SGR_2983</name>
</gene>
<dbReference type="EC" id="7.1.1.-" evidence="1"/>
<dbReference type="EMBL" id="AP009493">
    <property type="protein sequence ID" value="BAG19812.1"/>
    <property type="molecule type" value="Genomic_DNA"/>
</dbReference>
<dbReference type="RefSeq" id="WP_003967083.1">
    <property type="nucleotide sequence ID" value="NC_010572.1"/>
</dbReference>
<dbReference type="SMR" id="B1W518"/>
<dbReference type="KEGG" id="sgr:SGR_2983"/>
<dbReference type="eggNOG" id="COG0377">
    <property type="taxonomic scope" value="Bacteria"/>
</dbReference>
<dbReference type="HOGENOM" id="CLU_055737_7_3_11"/>
<dbReference type="Proteomes" id="UP000001685">
    <property type="component" value="Chromosome"/>
</dbReference>
<dbReference type="GO" id="GO:0005886">
    <property type="term" value="C:plasma membrane"/>
    <property type="evidence" value="ECO:0007669"/>
    <property type="project" value="UniProtKB-SubCell"/>
</dbReference>
<dbReference type="GO" id="GO:0045271">
    <property type="term" value="C:respiratory chain complex I"/>
    <property type="evidence" value="ECO:0007669"/>
    <property type="project" value="TreeGrafter"/>
</dbReference>
<dbReference type="GO" id="GO:0051539">
    <property type="term" value="F:4 iron, 4 sulfur cluster binding"/>
    <property type="evidence" value="ECO:0007669"/>
    <property type="project" value="UniProtKB-KW"/>
</dbReference>
<dbReference type="GO" id="GO:0005506">
    <property type="term" value="F:iron ion binding"/>
    <property type="evidence" value="ECO:0007669"/>
    <property type="project" value="UniProtKB-UniRule"/>
</dbReference>
<dbReference type="GO" id="GO:0008137">
    <property type="term" value="F:NADH dehydrogenase (ubiquinone) activity"/>
    <property type="evidence" value="ECO:0007669"/>
    <property type="project" value="InterPro"/>
</dbReference>
<dbReference type="GO" id="GO:0050136">
    <property type="term" value="F:NADH:ubiquinone reductase (non-electrogenic) activity"/>
    <property type="evidence" value="ECO:0007669"/>
    <property type="project" value="UniProtKB-UniRule"/>
</dbReference>
<dbReference type="GO" id="GO:0048038">
    <property type="term" value="F:quinone binding"/>
    <property type="evidence" value="ECO:0007669"/>
    <property type="project" value="UniProtKB-KW"/>
</dbReference>
<dbReference type="GO" id="GO:0009060">
    <property type="term" value="P:aerobic respiration"/>
    <property type="evidence" value="ECO:0007669"/>
    <property type="project" value="TreeGrafter"/>
</dbReference>
<dbReference type="GO" id="GO:0015990">
    <property type="term" value="P:electron transport coupled proton transport"/>
    <property type="evidence" value="ECO:0007669"/>
    <property type="project" value="TreeGrafter"/>
</dbReference>
<dbReference type="FunFam" id="3.40.50.12280:FF:000004">
    <property type="entry name" value="NADH-quinone oxidoreductase subunit B"/>
    <property type="match status" value="1"/>
</dbReference>
<dbReference type="Gene3D" id="3.40.50.12280">
    <property type="match status" value="1"/>
</dbReference>
<dbReference type="HAMAP" id="MF_01356">
    <property type="entry name" value="NDH1_NuoB"/>
    <property type="match status" value="1"/>
</dbReference>
<dbReference type="InterPro" id="IPR006137">
    <property type="entry name" value="NADH_UbQ_OxRdtase-like_20kDa"/>
</dbReference>
<dbReference type="InterPro" id="IPR006138">
    <property type="entry name" value="NADH_UQ_OxRdtase_20Kd_su"/>
</dbReference>
<dbReference type="NCBIfam" id="TIGR01957">
    <property type="entry name" value="nuoB_fam"/>
    <property type="match status" value="1"/>
</dbReference>
<dbReference type="NCBIfam" id="NF005012">
    <property type="entry name" value="PRK06411.1"/>
    <property type="match status" value="1"/>
</dbReference>
<dbReference type="PANTHER" id="PTHR11995">
    <property type="entry name" value="NADH DEHYDROGENASE"/>
    <property type="match status" value="1"/>
</dbReference>
<dbReference type="PANTHER" id="PTHR11995:SF14">
    <property type="entry name" value="NADH DEHYDROGENASE [UBIQUINONE] IRON-SULFUR PROTEIN 7, MITOCHONDRIAL"/>
    <property type="match status" value="1"/>
</dbReference>
<dbReference type="Pfam" id="PF01058">
    <property type="entry name" value="Oxidored_q6"/>
    <property type="match status" value="1"/>
</dbReference>
<dbReference type="SUPFAM" id="SSF56770">
    <property type="entry name" value="HydA/Nqo6-like"/>
    <property type="match status" value="1"/>
</dbReference>
<dbReference type="PROSITE" id="PS01150">
    <property type="entry name" value="COMPLEX1_20K"/>
    <property type="match status" value="1"/>
</dbReference>
<accession>B1W518</accession>
<reference key="1">
    <citation type="journal article" date="2008" name="J. Bacteriol.">
        <title>Genome sequence of the streptomycin-producing microorganism Streptomyces griseus IFO 13350.</title>
        <authorList>
            <person name="Ohnishi Y."/>
            <person name="Ishikawa J."/>
            <person name="Hara H."/>
            <person name="Suzuki H."/>
            <person name="Ikenoya M."/>
            <person name="Ikeda H."/>
            <person name="Yamashita A."/>
            <person name="Hattori M."/>
            <person name="Horinouchi S."/>
        </authorList>
    </citation>
    <scope>NUCLEOTIDE SEQUENCE [LARGE SCALE GENOMIC DNA]</scope>
    <source>
        <strain>JCM 4626 / CBS 651.72 / NBRC 13350 / KCC S-0626 / ISP 5235</strain>
    </source>
</reference>
<proteinExistence type="inferred from homology"/>
<feature type="chain" id="PRO_0000376389" description="NADH-quinone oxidoreductase subunit B 1">
    <location>
        <begin position="1"/>
        <end position="184"/>
    </location>
</feature>
<feature type="binding site" evidence="1">
    <location>
        <position position="37"/>
    </location>
    <ligand>
        <name>[4Fe-4S] cluster</name>
        <dbReference type="ChEBI" id="CHEBI:49883"/>
    </ligand>
</feature>
<feature type="binding site" evidence="1">
    <location>
        <position position="38"/>
    </location>
    <ligand>
        <name>[4Fe-4S] cluster</name>
        <dbReference type="ChEBI" id="CHEBI:49883"/>
    </ligand>
</feature>
<feature type="binding site" evidence="1">
    <location>
        <position position="103"/>
    </location>
    <ligand>
        <name>[4Fe-4S] cluster</name>
        <dbReference type="ChEBI" id="CHEBI:49883"/>
    </ligand>
</feature>
<feature type="binding site" evidence="1">
    <location>
        <position position="132"/>
    </location>
    <ligand>
        <name>[4Fe-4S] cluster</name>
        <dbReference type="ChEBI" id="CHEBI:49883"/>
    </ligand>
</feature>
<name>NUOB1_STRGG</name>
<comment type="function">
    <text evidence="1">NDH-1 shuttles electrons from NADH, via FMN and iron-sulfur (Fe-S) centers, to quinones in the respiratory chain. The immediate electron acceptor for the enzyme in this species is believed to be a menaquinone. Couples the redox reaction to proton translocation (for every two electrons transferred, four hydrogen ions are translocated across the cytoplasmic membrane), and thus conserves the redox energy in a proton gradient.</text>
</comment>
<comment type="catalytic activity">
    <reaction evidence="1">
        <text>a quinone + NADH + 5 H(+)(in) = a quinol + NAD(+) + 4 H(+)(out)</text>
        <dbReference type="Rhea" id="RHEA:57888"/>
        <dbReference type="ChEBI" id="CHEBI:15378"/>
        <dbReference type="ChEBI" id="CHEBI:24646"/>
        <dbReference type="ChEBI" id="CHEBI:57540"/>
        <dbReference type="ChEBI" id="CHEBI:57945"/>
        <dbReference type="ChEBI" id="CHEBI:132124"/>
    </reaction>
</comment>
<comment type="cofactor">
    <cofactor evidence="1">
        <name>[4Fe-4S] cluster</name>
        <dbReference type="ChEBI" id="CHEBI:49883"/>
    </cofactor>
    <text evidence="1">Binds 1 [4Fe-4S] cluster.</text>
</comment>
<comment type="subunit">
    <text evidence="1">NDH-1 is composed of 14 different subunits. Subunits NuoB, C, D, E, F, and G constitute the peripheral sector of the complex.</text>
</comment>
<comment type="subcellular location">
    <subcellularLocation>
        <location evidence="1">Cell membrane</location>
        <topology evidence="1">Peripheral membrane protein</topology>
        <orientation evidence="1">Cytoplasmic side</orientation>
    </subcellularLocation>
</comment>
<comment type="similarity">
    <text evidence="1">Belongs to the complex I 20 kDa subunit family.</text>
</comment>
<keyword id="KW-0004">4Fe-4S</keyword>
<keyword id="KW-1003">Cell membrane</keyword>
<keyword id="KW-0408">Iron</keyword>
<keyword id="KW-0411">Iron-sulfur</keyword>
<keyword id="KW-0472">Membrane</keyword>
<keyword id="KW-0479">Metal-binding</keyword>
<keyword id="KW-0520">NAD</keyword>
<keyword id="KW-0874">Quinone</keyword>
<keyword id="KW-1278">Translocase</keyword>
<keyword id="KW-0813">Transport</keyword>
<protein>
    <recommendedName>
        <fullName evidence="1">NADH-quinone oxidoreductase subunit B 1</fullName>
        <ecNumber evidence="1">7.1.1.-</ecNumber>
    </recommendedName>
    <alternativeName>
        <fullName evidence="1">NADH dehydrogenase I subunit B 1</fullName>
    </alternativeName>
    <alternativeName>
        <fullName evidence="1">NDH-1 subunit B 1</fullName>
    </alternativeName>
</protein>
<evidence type="ECO:0000255" key="1">
    <source>
        <dbReference type="HAMAP-Rule" id="MF_01356"/>
    </source>
</evidence>
<sequence>MGLEEKLPSGFVLTTVEQAAGWVRKSSVFPATFGLACCAIEMMTTGAGRYDLARFGMEVFRGSPRQADLMIVAGRVSQKMAPVLRQVYDQMPNPKWVISMGVCASSGGMFNNYAIVQGVDHIVPVDIYLPGCPPRPEMLLDAILKLHQKIQTSKLGVNAEEAAREAEEAALKALPLIEMKGLLR</sequence>
<organism>
    <name type="scientific">Streptomyces griseus subsp. griseus (strain JCM 4626 / CBS 651.72 / NBRC 13350 / KCC S-0626 / ISP 5235)</name>
    <dbReference type="NCBI Taxonomy" id="455632"/>
    <lineage>
        <taxon>Bacteria</taxon>
        <taxon>Bacillati</taxon>
        <taxon>Actinomycetota</taxon>
        <taxon>Actinomycetes</taxon>
        <taxon>Kitasatosporales</taxon>
        <taxon>Streptomycetaceae</taxon>
        <taxon>Streptomyces</taxon>
    </lineage>
</organism>